<dbReference type="EMBL" id="AAFI02000190">
    <property type="protein sequence ID" value="EDR41014.1"/>
    <property type="molecule type" value="Genomic_DNA"/>
</dbReference>
<dbReference type="RefSeq" id="XP_001733060.1">
    <property type="nucleotide sequence ID" value="XM_001733008.1"/>
</dbReference>
<dbReference type="PaxDb" id="44689-DDB0234105"/>
<dbReference type="EnsemblProtists" id="EDR41014">
    <property type="protein sequence ID" value="EDR41014"/>
    <property type="gene ID" value="DDB_G0292526"/>
</dbReference>
<dbReference type="GeneID" id="8628669"/>
<dbReference type="KEGG" id="ddi:DDB_G0292526"/>
<dbReference type="dictyBase" id="DDB_G0292526"/>
<dbReference type="HOGENOM" id="CLU_2983093_0_0_1"/>
<dbReference type="InParanoid" id="B0G195"/>
<dbReference type="PRO" id="PR:B0G195"/>
<dbReference type="Proteomes" id="UP000002195">
    <property type="component" value="Chromosome 6"/>
</dbReference>
<sequence length="58" mass="6993">MLFENLNNFSLKNNKNINQNIKMSCIKNEKYNDLRICMMVHPVAPVKTQRFVRVEYYP</sequence>
<accession>B0G195</accession>
<reference key="1">
    <citation type="journal article" date="2005" name="Nature">
        <title>The genome of the social amoeba Dictyostelium discoideum.</title>
        <authorList>
            <person name="Eichinger L."/>
            <person name="Pachebat J.A."/>
            <person name="Gloeckner G."/>
            <person name="Rajandream M.A."/>
            <person name="Sucgang R."/>
            <person name="Berriman M."/>
            <person name="Song J."/>
            <person name="Olsen R."/>
            <person name="Szafranski K."/>
            <person name="Xu Q."/>
            <person name="Tunggal B."/>
            <person name="Kummerfeld S."/>
            <person name="Madera M."/>
            <person name="Konfortov B.A."/>
            <person name="Rivero F."/>
            <person name="Bankier A.T."/>
            <person name="Lehmann R."/>
            <person name="Hamlin N."/>
            <person name="Davies R."/>
            <person name="Gaudet P."/>
            <person name="Fey P."/>
            <person name="Pilcher K."/>
            <person name="Chen G."/>
            <person name="Saunders D."/>
            <person name="Sodergren E.J."/>
            <person name="Davis P."/>
            <person name="Kerhornou A."/>
            <person name="Nie X."/>
            <person name="Hall N."/>
            <person name="Anjard C."/>
            <person name="Hemphill L."/>
            <person name="Bason N."/>
            <person name="Farbrother P."/>
            <person name="Desany B."/>
            <person name="Just E."/>
            <person name="Morio T."/>
            <person name="Rost R."/>
            <person name="Churcher C.M."/>
            <person name="Cooper J."/>
            <person name="Haydock S."/>
            <person name="van Driessche N."/>
            <person name="Cronin A."/>
            <person name="Goodhead I."/>
            <person name="Muzny D.M."/>
            <person name="Mourier T."/>
            <person name="Pain A."/>
            <person name="Lu M."/>
            <person name="Harper D."/>
            <person name="Lindsay R."/>
            <person name="Hauser H."/>
            <person name="James K.D."/>
            <person name="Quiles M."/>
            <person name="Madan Babu M."/>
            <person name="Saito T."/>
            <person name="Buchrieser C."/>
            <person name="Wardroper A."/>
            <person name="Felder M."/>
            <person name="Thangavelu M."/>
            <person name="Johnson D."/>
            <person name="Knights A."/>
            <person name="Loulseged H."/>
            <person name="Mungall K.L."/>
            <person name="Oliver K."/>
            <person name="Price C."/>
            <person name="Quail M.A."/>
            <person name="Urushihara H."/>
            <person name="Hernandez J."/>
            <person name="Rabbinowitsch E."/>
            <person name="Steffen D."/>
            <person name="Sanders M."/>
            <person name="Ma J."/>
            <person name="Kohara Y."/>
            <person name="Sharp S."/>
            <person name="Simmonds M.N."/>
            <person name="Spiegler S."/>
            <person name="Tivey A."/>
            <person name="Sugano S."/>
            <person name="White B."/>
            <person name="Walker D."/>
            <person name="Woodward J.R."/>
            <person name="Winckler T."/>
            <person name="Tanaka Y."/>
            <person name="Shaulsky G."/>
            <person name="Schleicher M."/>
            <person name="Weinstock G.M."/>
            <person name="Rosenthal A."/>
            <person name="Cox E.C."/>
            <person name="Chisholm R.L."/>
            <person name="Gibbs R.A."/>
            <person name="Loomis W.F."/>
            <person name="Platzer M."/>
            <person name="Kay R.R."/>
            <person name="Williams J.G."/>
            <person name="Dear P.H."/>
            <person name="Noegel A.A."/>
            <person name="Barrell B.G."/>
            <person name="Kuspa A."/>
        </authorList>
    </citation>
    <scope>NUCLEOTIDE SEQUENCE [LARGE SCALE GENOMIC DNA]</scope>
    <source>
        <strain>AX4</strain>
    </source>
</reference>
<name>Y4105_DICDI</name>
<protein>
    <recommendedName>
        <fullName>Uncharacterized protein DDB_G0292526</fullName>
    </recommendedName>
</protein>
<organism>
    <name type="scientific">Dictyostelium discoideum</name>
    <name type="common">Social amoeba</name>
    <dbReference type="NCBI Taxonomy" id="44689"/>
    <lineage>
        <taxon>Eukaryota</taxon>
        <taxon>Amoebozoa</taxon>
        <taxon>Evosea</taxon>
        <taxon>Eumycetozoa</taxon>
        <taxon>Dictyostelia</taxon>
        <taxon>Dictyosteliales</taxon>
        <taxon>Dictyosteliaceae</taxon>
        <taxon>Dictyostelium</taxon>
    </lineage>
</organism>
<keyword id="KW-1185">Reference proteome</keyword>
<feature type="chain" id="PRO_0000343908" description="Uncharacterized protein DDB_G0292526">
    <location>
        <begin position="1"/>
        <end position="58"/>
    </location>
</feature>
<proteinExistence type="predicted"/>
<gene>
    <name type="ORF">DDB_G0292526</name>
</gene>